<name>GLSA_CROS8</name>
<gene>
    <name evidence="1" type="primary">glsA</name>
    <name type="ordered locus">ESA_01818</name>
</gene>
<keyword id="KW-0378">Hydrolase</keyword>
<keyword id="KW-1185">Reference proteome</keyword>
<proteinExistence type="inferred from homology"/>
<accession>A7MPS3</accession>
<reference key="1">
    <citation type="journal article" date="2010" name="PLoS ONE">
        <title>Genome sequence of Cronobacter sakazakii BAA-894 and comparative genomic hybridization analysis with other Cronobacter species.</title>
        <authorList>
            <person name="Kucerova E."/>
            <person name="Clifton S.W."/>
            <person name="Xia X.Q."/>
            <person name="Long F."/>
            <person name="Porwollik S."/>
            <person name="Fulton L."/>
            <person name="Fronick C."/>
            <person name="Minx P."/>
            <person name="Kyung K."/>
            <person name="Warren W."/>
            <person name="Fulton R."/>
            <person name="Feng D."/>
            <person name="Wollam A."/>
            <person name="Shah N."/>
            <person name="Bhonagiri V."/>
            <person name="Nash W.E."/>
            <person name="Hallsworth-Pepin K."/>
            <person name="Wilson R.K."/>
            <person name="McClelland M."/>
            <person name="Forsythe S.J."/>
        </authorList>
    </citation>
    <scope>NUCLEOTIDE SEQUENCE [LARGE SCALE GENOMIC DNA]</scope>
    <source>
        <strain>ATCC BAA-894</strain>
    </source>
</reference>
<protein>
    <recommendedName>
        <fullName evidence="1">Glutaminase</fullName>
        <ecNumber evidence="1">3.5.1.2</ecNumber>
    </recommendedName>
</protein>
<feature type="chain" id="PRO_1000048335" description="Glutaminase">
    <location>
        <begin position="1"/>
        <end position="308"/>
    </location>
</feature>
<feature type="binding site" evidence="1">
    <location>
        <position position="66"/>
    </location>
    <ligand>
        <name>substrate</name>
    </ligand>
</feature>
<feature type="binding site" evidence="1">
    <location>
        <position position="117"/>
    </location>
    <ligand>
        <name>substrate</name>
    </ligand>
</feature>
<feature type="binding site" evidence="1">
    <location>
        <position position="161"/>
    </location>
    <ligand>
        <name>substrate</name>
    </ligand>
</feature>
<feature type="binding site" evidence="1">
    <location>
        <position position="168"/>
    </location>
    <ligand>
        <name>substrate</name>
    </ligand>
</feature>
<feature type="binding site" evidence="1">
    <location>
        <position position="192"/>
    </location>
    <ligand>
        <name>substrate</name>
    </ligand>
</feature>
<feature type="binding site" evidence="1">
    <location>
        <position position="244"/>
    </location>
    <ligand>
        <name>substrate</name>
    </ligand>
</feature>
<feature type="binding site" evidence="1">
    <location>
        <position position="262"/>
    </location>
    <ligand>
        <name>substrate</name>
    </ligand>
</feature>
<sequence>MTHTLNNELLASILEQVRPLAAQGKVADYIPALADVPADRLGIAVCTVGGECFAAGDADERFSIQSISKVLSLVLAMGRYDDDEIWERVGKDPSGQPFNSLVQLELEQGKPRNPFINAGALVVCDMLQSRLSAPKQRMLEVVRNLCGAPDIIYDTAVARSEFEHSARNAAIAYLMKSFGNFHNDVITVLQNYFHYCALKMSCAELARAFLFLANQGRAPHLDTPVISPVQARQVNALMATSGMYESSGEFAWRVGMPGKSGVGGGIIAVVPHEMSIAVWSPALDHAGNSLAGIAALEILAREIGRSIF</sequence>
<dbReference type="EC" id="3.5.1.2" evidence="1"/>
<dbReference type="EMBL" id="CP000783">
    <property type="protein sequence ID" value="ABU77072.1"/>
    <property type="molecule type" value="Genomic_DNA"/>
</dbReference>
<dbReference type="SMR" id="A7MPS3"/>
<dbReference type="KEGG" id="esa:ESA_01818"/>
<dbReference type="HOGENOM" id="CLU_027932_1_1_6"/>
<dbReference type="Proteomes" id="UP000000260">
    <property type="component" value="Chromosome"/>
</dbReference>
<dbReference type="GO" id="GO:0004359">
    <property type="term" value="F:glutaminase activity"/>
    <property type="evidence" value="ECO:0007669"/>
    <property type="project" value="UniProtKB-UniRule"/>
</dbReference>
<dbReference type="GO" id="GO:0006537">
    <property type="term" value="P:glutamate biosynthetic process"/>
    <property type="evidence" value="ECO:0007669"/>
    <property type="project" value="TreeGrafter"/>
</dbReference>
<dbReference type="GO" id="GO:0006543">
    <property type="term" value="P:glutamine catabolic process"/>
    <property type="evidence" value="ECO:0007669"/>
    <property type="project" value="TreeGrafter"/>
</dbReference>
<dbReference type="FunFam" id="3.40.710.10:FF:000005">
    <property type="entry name" value="Glutaminase"/>
    <property type="match status" value="1"/>
</dbReference>
<dbReference type="Gene3D" id="3.40.710.10">
    <property type="entry name" value="DD-peptidase/beta-lactamase superfamily"/>
    <property type="match status" value="1"/>
</dbReference>
<dbReference type="HAMAP" id="MF_00313">
    <property type="entry name" value="Glutaminase"/>
    <property type="match status" value="1"/>
</dbReference>
<dbReference type="InterPro" id="IPR012338">
    <property type="entry name" value="Beta-lactam/transpept-like"/>
</dbReference>
<dbReference type="InterPro" id="IPR015868">
    <property type="entry name" value="Glutaminase"/>
</dbReference>
<dbReference type="NCBIfam" id="TIGR03814">
    <property type="entry name" value="Gln_ase"/>
    <property type="match status" value="1"/>
</dbReference>
<dbReference type="NCBIfam" id="NF002132">
    <property type="entry name" value="PRK00971.1-1"/>
    <property type="match status" value="1"/>
</dbReference>
<dbReference type="NCBIfam" id="NF002133">
    <property type="entry name" value="PRK00971.1-2"/>
    <property type="match status" value="1"/>
</dbReference>
<dbReference type="PANTHER" id="PTHR12544">
    <property type="entry name" value="GLUTAMINASE"/>
    <property type="match status" value="1"/>
</dbReference>
<dbReference type="PANTHER" id="PTHR12544:SF29">
    <property type="entry name" value="GLUTAMINASE"/>
    <property type="match status" value="1"/>
</dbReference>
<dbReference type="Pfam" id="PF04960">
    <property type="entry name" value="Glutaminase"/>
    <property type="match status" value="1"/>
</dbReference>
<dbReference type="SUPFAM" id="SSF56601">
    <property type="entry name" value="beta-lactamase/transpeptidase-like"/>
    <property type="match status" value="1"/>
</dbReference>
<comment type="catalytic activity">
    <reaction evidence="1">
        <text>L-glutamine + H2O = L-glutamate + NH4(+)</text>
        <dbReference type="Rhea" id="RHEA:15889"/>
        <dbReference type="ChEBI" id="CHEBI:15377"/>
        <dbReference type="ChEBI" id="CHEBI:28938"/>
        <dbReference type="ChEBI" id="CHEBI:29985"/>
        <dbReference type="ChEBI" id="CHEBI:58359"/>
        <dbReference type="EC" id="3.5.1.2"/>
    </reaction>
</comment>
<comment type="subunit">
    <text evidence="1">Homotetramer.</text>
</comment>
<comment type="similarity">
    <text evidence="1">Belongs to the glutaminase family.</text>
</comment>
<evidence type="ECO:0000255" key="1">
    <source>
        <dbReference type="HAMAP-Rule" id="MF_00313"/>
    </source>
</evidence>
<organism>
    <name type="scientific">Cronobacter sakazakii (strain ATCC BAA-894)</name>
    <name type="common">Enterobacter sakazakii</name>
    <dbReference type="NCBI Taxonomy" id="290339"/>
    <lineage>
        <taxon>Bacteria</taxon>
        <taxon>Pseudomonadati</taxon>
        <taxon>Pseudomonadota</taxon>
        <taxon>Gammaproteobacteria</taxon>
        <taxon>Enterobacterales</taxon>
        <taxon>Enterobacteriaceae</taxon>
        <taxon>Cronobacter</taxon>
    </lineage>
</organism>